<reference key="1">
    <citation type="journal article" date="2000" name="Nature">
        <title>Sequence and analysis of chromosome 1 of the plant Arabidopsis thaliana.</title>
        <authorList>
            <person name="Theologis A."/>
            <person name="Ecker J.R."/>
            <person name="Palm C.J."/>
            <person name="Federspiel N.A."/>
            <person name="Kaul S."/>
            <person name="White O."/>
            <person name="Alonso J."/>
            <person name="Altafi H."/>
            <person name="Araujo R."/>
            <person name="Bowman C.L."/>
            <person name="Brooks S.Y."/>
            <person name="Buehler E."/>
            <person name="Chan A."/>
            <person name="Chao Q."/>
            <person name="Chen H."/>
            <person name="Cheuk R.F."/>
            <person name="Chin C.W."/>
            <person name="Chung M.K."/>
            <person name="Conn L."/>
            <person name="Conway A.B."/>
            <person name="Conway A.R."/>
            <person name="Creasy T.H."/>
            <person name="Dewar K."/>
            <person name="Dunn P."/>
            <person name="Etgu P."/>
            <person name="Feldblyum T.V."/>
            <person name="Feng J.-D."/>
            <person name="Fong B."/>
            <person name="Fujii C.Y."/>
            <person name="Gill J.E."/>
            <person name="Goldsmith A.D."/>
            <person name="Haas B."/>
            <person name="Hansen N.F."/>
            <person name="Hughes B."/>
            <person name="Huizar L."/>
            <person name="Hunter J.L."/>
            <person name="Jenkins J."/>
            <person name="Johnson-Hopson C."/>
            <person name="Khan S."/>
            <person name="Khaykin E."/>
            <person name="Kim C.J."/>
            <person name="Koo H.L."/>
            <person name="Kremenetskaia I."/>
            <person name="Kurtz D.B."/>
            <person name="Kwan A."/>
            <person name="Lam B."/>
            <person name="Langin-Hooper S."/>
            <person name="Lee A."/>
            <person name="Lee J.M."/>
            <person name="Lenz C.A."/>
            <person name="Li J.H."/>
            <person name="Li Y.-P."/>
            <person name="Lin X."/>
            <person name="Liu S.X."/>
            <person name="Liu Z.A."/>
            <person name="Luros J.S."/>
            <person name="Maiti R."/>
            <person name="Marziali A."/>
            <person name="Militscher J."/>
            <person name="Miranda M."/>
            <person name="Nguyen M."/>
            <person name="Nierman W.C."/>
            <person name="Osborne B.I."/>
            <person name="Pai G."/>
            <person name="Peterson J."/>
            <person name="Pham P.K."/>
            <person name="Rizzo M."/>
            <person name="Rooney T."/>
            <person name="Rowley D."/>
            <person name="Sakano H."/>
            <person name="Salzberg S.L."/>
            <person name="Schwartz J.R."/>
            <person name="Shinn P."/>
            <person name="Southwick A.M."/>
            <person name="Sun H."/>
            <person name="Tallon L.J."/>
            <person name="Tambunga G."/>
            <person name="Toriumi M.J."/>
            <person name="Town C.D."/>
            <person name="Utterback T."/>
            <person name="Van Aken S."/>
            <person name="Vaysberg M."/>
            <person name="Vysotskaia V.S."/>
            <person name="Walker M."/>
            <person name="Wu D."/>
            <person name="Yu G."/>
            <person name="Fraser C.M."/>
            <person name="Venter J.C."/>
            <person name="Davis R.W."/>
        </authorList>
    </citation>
    <scope>NUCLEOTIDE SEQUENCE [LARGE SCALE GENOMIC DNA]</scope>
    <source>
        <strain>cv. Columbia</strain>
    </source>
</reference>
<reference key="2">
    <citation type="journal article" date="2017" name="Plant J.">
        <title>Araport11: a complete reannotation of the Arabidopsis thaliana reference genome.</title>
        <authorList>
            <person name="Cheng C.Y."/>
            <person name="Krishnakumar V."/>
            <person name="Chan A.P."/>
            <person name="Thibaud-Nissen F."/>
            <person name="Schobel S."/>
            <person name="Town C.D."/>
        </authorList>
    </citation>
    <scope>GENOME REANNOTATION</scope>
    <source>
        <strain>cv. Columbia</strain>
    </source>
</reference>
<reference key="3">
    <citation type="journal article" date="2008" name="J. Proteome Res.">
        <title>Site-specific phosphorylation profiling of Arabidopsis proteins by mass spectrometry and peptide chip analysis.</title>
        <authorList>
            <person name="de la Fuente van Bentem S."/>
            <person name="Anrather D."/>
            <person name="Dohnal I."/>
            <person name="Roitinger E."/>
            <person name="Csaszar E."/>
            <person name="Joore J."/>
            <person name="Buijnink J."/>
            <person name="Carreri A."/>
            <person name="Forzani C."/>
            <person name="Lorkovic Z.J."/>
            <person name="Barta A."/>
            <person name="Lecourieux D."/>
            <person name="Verhounig A."/>
            <person name="Jonak C."/>
            <person name="Hirt H."/>
        </authorList>
    </citation>
    <scope>IDENTIFICATION BY MASS SPECTROMETRY [LARGE SCALE ANALYSIS]</scope>
    <source>
        <tissue>Root</tissue>
    </source>
</reference>
<reference key="4">
    <citation type="journal article" date="2008" name="Plant Cell">
        <title>An exocyst complex functions in plant cell growth in Arabidopsis and tobacco.</title>
        <authorList>
            <person name="Hala M."/>
            <person name="Cole R."/>
            <person name="Synek L."/>
            <person name="Drdova E."/>
            <person name="Pecenkova T."/>
            <person name="Nordheim A."/>
            <person name="Lamkemeyer T."/>
            <person name="Madlung J."/>
            <person name="Hochholdinger F."/>
            <person name="Fowler J.E."/>
            <person name="Zarsky V."/>
        </authorList>
    </citation>
    <scope>COMPONENT OF THE EXOCYST COMPLEX</scope>
    <scope>DISRUPTION PHENOTYPE</scope>
</reference>
<reference key="5">
    <citation type="journal article" date="2009" name="J. Proteomics">
        <title>Phosphoproteomic analysis of nuclei-enriched fractions from Arabidopsis thaliana.</title>
        <authorList>
            <person name="Jones A.M.E."/>
            <person name="MacLean D."/>
            <person name="Studholme D.J."/>
            <person name="Serna-Sanz A."/>
            <person name="Andreasson E."/>
            <person name="Rathjen J.P."/>
            <person name="Peck S.C."/>
        </authorList>
    </citation>
    <scope>PHOSPHORYLATION [LARGE SCALE ANALYSIS] AT SER-179</scope>
    <scope>IDENTIFICATION BY MASS SPECTROMETRY [LARGE SCALE ANALYSIS]</scope>
    <source>
        <strain>cv. Columbia</strain>
    </source>
</reference>
<reference key="6">
    <citation type="journal article" date="2010" name="New Phytol.">
        <title>Characterization of the Arabidopsis thaliana exocyst complex gene families by phylogenetic, expression profiling, and subcellular localization studies.</title>
        <authorList>
            <person name="Chong Y.T."/>
            <person name="Gidda S.K."/>
            <person name="Sanford C."/>
            <person name="Parkinson J."/>
            <person name="Mullen R.T."/>
            <person name="Goring D.R."/>
        </authorList>
    </citation>
    <scope>GENE FAMILY</scope>
    <scope>NOMENCLATURE</scope>
</reference>
<keyword id="KW-0268">Exocytosis</keyword>
<keyword id="KW-0597">Phosphoprotein</keyword>
<keyword id="KW-1185">Reference proteome</keyword>
<keyword id="KW-0813">Transport</keyword>
<proteinExistence type="evidence at protein level"/>
<feature type="chain" id="PRO_0000424570" description="Exocyst complex component SEC5B">
    <location>
        <begin position="1"/>
        <end position="1090"/>
    </location>
</feature>
<feature type="region of interest" description="Disordered" evidence="1">
    <location>
        <begin position="1"/>
        <end position="126"/>
    </location>
</feature>
<feature type="region of interest" description="Disordered" evidence="1">
    <location>
        <begin position="486"/>
        <end position="511"/>
    </location>
</feature>
<feature type="region of interest" description="Disordered" evidence="1">
    <location>
        <begin position="984"/>
        <end position="1013"/>
    </location>
</feature>
<feature type="region of interest" description="Disordered" evidence="1">
    <location>
        <begin position="1055"/>
        <end position="1090"/>
    </location>
</feature>
<feature type="compositionally biased region" description="Acidic residues" evidence="1">
    <location>
        <begin position="1"/>
        <end position="12"/>
    </location>
</feature>
<feature type="compositionally biased region" description="Polar residues" evidence="1">
    <location>
        <begin position="23"/>
        <end position="46"/>
    </location>
</feature>
<feature type="compositionally biased region" description="Low complexity" evidence="1">
    <location>
        <begin position="52"/>
        <end position="62"/>
    </location>
</feature>
<feature type="compositionally biased region" description="Gly residues" evidence="1">
    <location>
        <begin position="96"/>
        <end position="109"/>
    </location>
</feature>
<feature type="compositionally biased region" description="Basic and acidic residues" evidence="1">
    <location>
        <begin position="110"/>
        <end position="126"/>
    </location>
</feature>
<feature type="compositionally biased region" description="Polar residues" evidence="1">
    <location>
        <begin position="486"/>
        <end position="502"/>
    </location>
</feature>
<feature type="compositionally biased region" description="Basic and acidic residues" evidence="1">
    <location>
        <begin position="999"/>
        <end position="1010"/>
    </location>
</feature>
<feature type="compositionally biased region" description="Polar residues" evidence="1">
    <location>
        <begin position="1062"/>
        <end position="1071"/>
    </location>
</feature>
<feature type="modified residue" description="Phosphoserine" evidence="4">
    <location>
        <position position="179"/>
    </location>
</feature>
<organism>
    <name type="scientific">Arabidopsis thaliana</name>
    <name type="common">Mouse-ear cress</name>
    <dbReference type="NCBI Taxonomy" id="3702"/>
    <lineage>
        <taxon>Eukaryota</taxon>
        <taxon>Viridiplantae</taxon>
        <taxon>Streptophyta</taxon>
        <taxon>Embryophyta</taxon>
        <taxon>Tracheophyta</taxon>
        <taxon>Spermatophyta</taxon>
        <taxon>Magnoliopsida</taxon>
        <taxon>eudicotyledons</taxon>
        <taxon>Gunneridae</taxon>
        <taxon>Pentapetalae</taxon>
        <taxon>rosids</taxon>
        <taxon>malvids</taxon>
        <taxon>Brassicales</taxon>
        <taxon>Brassicaceae</taxon>
        <taxon>Camelineae</taxon>
        <taxon>Arabidopsis</taxon>
    </lineage>
</organism>
<evidence type="ECO:0000256" key="1">
    <source>
        <dbReference type="SAM" id="MobiDB-lite"/>
    </source>
</evidence>
<evidence type="ECO:0000269" key="2">
    <source>
    </source>
</evidence>
<evidence type="ECO:0000305" key="3"/>
<evidence type="ECO:0007744" key="4">
    <source>
    </source>
</evidence>
<comment type="function">
    <text>Component of the exocyst complex involved in the docking of exocytic vesicles with fusion sites on the plasma membrane during regulated or polarized secretion. Involved in polarized cell growth and organ morphogenesis. During cytokinesis, involved in cell plate initiation, cell plate maturation and formation of new primary cell wall.</text>
</comment>
<comment type="subunit">
    <text>The exocyst complex is composed of SEC3, SEC5, SEC6, SEC8, SEC10, EXO70A1 and EXO84B.</text>
</comment>
<comment type="disruption phenotype">
    <text evidence="2">No visible phenotype under normal growth conditions, but the double mutant sec5a-1 and sec5b-1 is male gametophytic lethal due to defect in pollen germination and pollen tube growth.</text>
</comment>
<comment type="similarity">
    <text evidence="3">Belongs to the SEC5 family.</text>
</comment>
<comment type="sequence caution" evidence="3">
    <conflict type="erroneous gene model prediction">
        <sequence resource="EMBL-CDS" id="AAF80645"/>
    </conflict>
</comment>
<comment type="sequence caution" evidence="3">
    <conflict type="erroneous gene model prediction">
        <sequence resource="EMBL-CDS" id="AAF81364"/>
    </conflict>
</comment>
<accession>F4HWE6</accession>
<accession>Q9LMN3</accession>
<accession>Q9LPV1</accession>
<name>SEC5B_ARATH</name>
<sequence length="1090" mass="122673">MSSSDDLDEDELLQMALKEQSQRDVTYQKPPSANSRKPVTNLVQQPRRQKRAAAPPSKGGAKASRKPSMDEDDESEVELLSISSGDEDEGNDRGRGGGGDGGGGRGRGGSGKERGRARKEDDRAWDGVEPDCWKRVNEAELARKVRDMRESRTAPSVTQNLDRKVSGADKKVVLTSLQSFPRGMECIDPLKLGIIDNKTLRLITESSESLSKAEKVDNALREKLVYTSDHFDPKLFISRIHQETSAADLESGALALKSDLKGRNLQRKQLVKDNFDCFVSCKTTIDDIESKLKRIEDDPDGSGTTHLFNCMKSVTSRANRAFEPLFERQAQAEKIRSVQGMLQRFRTLFNLPSIIRSSISKGEYDLAVREYKKAKSIALPSHVNLLKRVLEEVEKVMQEFKGTLYRSMEDPKIDFTSLENTVRLLLELEPESDPVWHYLNVQNHRIHGMLEKCTFDHEARMEILRNQVHERALSDAKWRQIQQNGVQLSDDTSSMEDNQVQVDQPLEESARREKDALRGRYIKILTAVIVYHLPTFWKTALSVFTGKFAKSSQVNDTSASKAEEKAEEARYSSHSLEEIAGMIRNTISVYEAKVQSTFHDFDESYILHPYMSDTIKEVSKACQAFEAKESAPHSAVMALRKVKVEITKIYIQRLCSWMRASTEEISKEETWIPVSILERNRSPYSISYLPLAFRSIIVSGMEQINMMILSLKGEAARSEDMFAHIEEILISVRLAFLNCFLDFAAHLEQIGADLSQRTTKRESWQNGYSNDHQEEQSINAPESVVDPHRQLLMILSNIGYCKDELASELYNKYKYTWLQSRRNDEDISDLQDLMMSFSGLGEKVLEHYTFAKANLIRTAATNYLLDSGIQWGAAPPVKGIRDAAVELLHTLVAVHAEVFAGAKPLLDKILGTLVEGLIDTFLSLLDENRSDDLSSIDANGFCQLMLELEYFETILKPYLTVDATESLKSLQGAVLEKAIESISETVENNPGGHQRKPTRGSEDAISDDKQSSVSPDDLLALAQQCTSGMLQLELEKTRLNSACFIETIPLDPVPPVAKAAYSRTSTDSPSRNYRESQPMGSPVQARPRRR</sequence>
<gene>
    <name type="primary">SEC5B</name>
    <name type="ordered locus">At1g21170</name>
    <name type="ORF">F16F4.13</name>
    <name type="ORF">T22I11.1</name>
</gene>
<dbReference type="EMBL" id="AC012190">
    <property type="protein sequence ID" value="AAF80645.1"/>
    <property type="status" value="ALT_SEQ"/>
    <property type="molecule type" value="Genomic_DNA"/>
</dbReference>
<dbReference type="EMBL" id="AC036104">
    <property type="protein sequence ID" value="AAF81364.1"/>
    <property type="status" value="ALT_SEQ"/>
    <property type="molecule type" value="Genomic_DNA"/>
</dbReference>
<dbReference type="EMBL" id="CP002684">
    <property type="protein sequence ID" value="AEE30072.1"/>
    <property type="molecule type" value="Genomic_DNA"/>
</dbReference>
<dbReference type="PIR" id="A86345">
    <property type="entry name" value="A86345"/>
</dbReference>
<dbReference type="PIR" id="H86344">
    <property type="entry name" value="H86344"/>
</dbReference>
<dbReference type="RefSeq" id="NP_173541.1">
    <property type="nucleotide sequence ID" value="NM_101971.3"/>
</dbReference>
<dbReference type="SMR" id="F4HWE6"/>
<dbReference type="BioGRID" id="23952">
    <property type="interactions" value="1"/>
</dbReference>
<dbReference type="FunCoup" id="F4HWE6">
    <property type="interactions" value="4285"/>
</dbReference>
<dbReference type="STRING" id="3702.F4HWE6"/>
<dbReference type="iPTMnet" id="F4HWE6"/>
<dbReference type="PaxDb" id="3702-AT1G21170.1"/>
<dbReference type="ProteomicsDB" id="232861"/>
<dbReference type="EnsemblPlants" id="AT1G21170.1">
    <property type="protein sequence ID" value="AT1G21170.1"/>
    <property type="gene ID" value="AT1G21170"/>
</dbReference>
<dbReference type="GeneID" id="838713"/>
<dbReference type="Gramene" id="AT1G21170.1">
    <property type="protein sequence ID" value="AT1G21170.1"/>
    <property type="gene ID" value="AT1G21170"/>
</dbReference>
<dbReference type="KEGG" id="ath:AT1G21170"/>
<dbReference type="Araport" id="AT1G21170"/>
<dbReference type="TAIR" id="AT1G21170">
    <property type="gene designation" value="SEC5B"/>
</dbReference>
<dbReference type="eggNOG" id="KOG2347">
    <property type="taxonomic scope" value="Eukaryota"/>
</dbReference>
<dbReference type="HOGENOM" id="CLU_003742_0_0_1"/>
<dbReference type="InParanoid" id="F4HWE6"/>
<dbReference type="OMA" id="MSAKWKS"/>
<dbReference type="PRO" id="PR:F4HWE6"/>
<dbReference type="Proteomes" id="UP000006548">
    <property type="component" value="Chromosome 1"/>
</dbReference>
<dbReference type="ExpressionAtlas" id="F4HWE6">
    <property type="expression patterns" value="baseline and differential"/>
</dbReference>
<dbReference type="GO" id="GO:0000145">
    <property type="term" value="C:exocyst"/>
    <property type="evidence" value="ECO:0007669"/>
    <property type="project" value="InterPro"/>
</dbReference>
<dbReference type="GO" id="GO:0060321">
    <property type="term" value="P:acceptance of pollen"/>
    <property type="evidence" value="ECO:0000316"/>
    <property type="project" value="TAIR"/>
</dbReference>
<dbReference type="GO" id="GO:0006887">
    <property type="term" value="P:exocytosis"/>
    <property type="evidence" value="ECO:0007669"/>
    <property type="project" value="UniProtKB-KW"/>
</dbReference>
<dbReference type="GO" id="GO:0006893">
    <property type="term" value="P:Golgi to plasma membrane transport"/>
    <property type="evidence" value="ECO:0007669"/>
    <property type="project" value="InterPro"/>
</dbReference>
<dbReference type="InterPro" id="IPR016159">
    <property type="entry name" value="Cullin_repeat-like_dom_sf"/>
</dbReference>
<dbReference type="InterPro" id="IPR029175">
    <property type="entry name" value="EXOC2/Sec5"/>
</dbReference>
<dbReference type="InterPro" id="IPR039481">
    <property type="entry name" value="EXOC2/Sec5_N_dom"/>
</dbReference>
<dbReference type="PANTHER" id="PTHR13043:SF1">
    <property type="entry name" value="EXOCYST COMPLEX COMPONENT 2"/>
    <property type="match status" value="1"/>
</dbReference>
<dbReference type="PANTHER" id="PTHR13043">
    <property type="entry name" value="EXOCYST COMPLEX COMPONENT SEC5"/>
    <property type="match status" value="1"/>
</dbReference>
<dbReference type="Pfam" id="PF15469">
    <property type="entry name" value="Sec5"/>
    <property type="match status" value="1"/>
</dbReference>
<dbReference type="SUPFAM" id="SSF74788">
    <property type="entry name" value="Cullin repeat-like"/>
    <property type="match status" value="1"/>
</dbReference>
<protein>
    <recommendedName>
        <fullName>Exocyst complex component SEC5B</fullName>
        <shortName>AtSec5b</shortName>
    </recommendedName>
</protein>